<accession>Q5UNX5</accession>
<organism>
    <name type="scientific">Acanthamoeba polyphaga mimivirus</name>
    <name type="common">APMV</name>
    <dbReference type="NCBI Taxonomy" id="212035"/>
    <lineage>
        <taxon>Viruses</taxon>
        <taxon>Varidnaviria</taxon>
        <taxon>Bamfordvirae</taxon>
        <taxon>Nucleocytoviricota</taxon>
        <taxon>Megaviricetes</taxon>
        <taxon>Imitervirales</taxon>
        <taxon>Mimiviridae</taxon>
        <taxon>Megamimivirinae</taxon>
        <taxon>Mimivirus</taxon>
        <taxon>Mimivirus bradfordmassiliense</taxon>
    </lineage>
</organism>
<dbReference type="EMBL" id="AY653733">
    <property type="protein sequence ID" value="AAV50985.1"/>
    <property type="molecule type" value="Genomic_DNA"/>
</dbReference>
<dbReference type="KEGG" id="vg:9925379"/>
<dbReference type="OrthoDB" id="14725at10239"/>
<dbReference type="Proteomes" id="UP000001134">
    <property type="component" value="Genome"/>
</dbReference>
<dbReference type="GO" id="GO:0044423">
    <property type="term" value="C:virion component"/>
    <property type="evidence" value="ECO:0007669"/>
    <property type="project" value="UniProtKB-KW"/>
</dbReference>
<feature type="chain" id="PRO_0000071336" description="Uncharacterized protein L725">
    <location>
        <begin position="1"/>
        <end position="224"/>
    </location>
</feature>
<organismHost>
    <name type="scientific">Acanthamoeba polyphaga</name>
    <name type="common">Amoeba</name>
    <dbReference type="NCBI Taxonomy" id="5757"/>
</organismHost>
<gene>
    <name type="ordered locus">MIMI_L725</name>
</gene>
<keyword id="KW-1185">Reference proteome</keyword>
<keyword id="KW-0946">Virion</keyword>
<evidence type="ECO:0000269" key="1">
    <source>
    </source>
</evidence>
<protein>
    <recommendedName>
        <fullName>Uncharacterized protein L725</fullName>
    </recommendedName>
</protein>
<reference key="1">
    <citation type="journal article" date="2004" name="Science">
        <title>The 1.2-megabase genome sequence of Mimivirus.</title>
        <authorList>
            <person name="Raoult D."/>
            <person name="Audic S."/>
            <person name="Robert C."/>
            <person name="Abergel C."/>
            <person name="Renesto P."/>
            <person name="Ogata H."/>
            <person name="La Scola B."/>
            <person name="Susan M."/>
            <person name="Claverie J.-M."/>
        </authorList>
    </citation>
    <scope>NUCLEOTIDE SEQUENCE [LARGE SCALE GENOMIC DNA]</scope>
    <source>
        <strain>Rowbotham-Bradford</strain>
    </source>
</reference>
<reference key="2">
    <citation type="journal article" date="2006" name="J. Virol.">
        <title>Mimivirus giant particles incorporate a large fraction of anonymous and unique gene products.</title>
        <authorList>
            <person name="Renesto P."/>
            <person name="Abergel C."/>
            <person name="Decloquement P."/>
            <person name="Moinier D."/>
            <person name="Azza S."/>
            <person name="Ogata H."/>
            <person name="Fourquet P."/>
            <person name="Gorvel J.-P."/>
            <person name="Claverie J.-M."/>
            <person name="Raoult D."/>
        </authorList>
    </citation>
    <scope>IDENTIFICATION BY MASS SPECTROMETRY [LARGE SCALE ANALYSIS]</scope>
    <scope>SUBCELLULAR LOCATION</scope>
</reference>
<sequence length="224" mass="26538">MANNLVQLIFDQFIEILEDLAAKDEWCFDFNKCDFDFRVRELVNHRLLDVKYTIKDECGRPRDVIQEIDITGICYEDLTTCKWVDYLTKLAVEYINNICPPRYIIIKEEPKKCRPQLPEWNPFPCKRTTTIYRRQKPVEKKPECEVIFEKGCECLPSCEREVPVPKEQIFIKYEPVPAKCCERTVLVRSPEQNRHSFGVHKGNIDYNNHVWPKCCQSKKCNCAH</sequence>
<name>YL725_MIMIV</name>
<proteinExistence type="evidence at protein level"/>
<comment type="subcellular location">
    <subcellularLocation>
        <location evidence="1">Virion</location>
    </subcellularLocation>
</comment>